<keyword id="KW-0025">Alternative splicing</keyword>
<keyword id="KW-0072">Autophagy</keyword>
<keyword id="KW-0256">Endoplasmic reticulum</keyword>
<keyword id="KW-0325">Glycoprotein</keyword>
<keyword id="KW-0472">Membrane</keyword>
<keyword id="KW-1267">Proteomics identification</keyword>
<keyword id="KW-1185">Reference proteome</keyword>
<keyword id="KW-0812">Transmembrane</keyword>
<keyword id="KW-1133">Transmembrane helix</keyword>
<protein>
    <recommendedName>
        <fullName>Transmembrane protein 39A</fullName>
    </recommendedName>
</protein>
<organism>
    <name type="scientific">Homo sapiens</name>
    <name type="common">Human</name>
    <dbReference type="NCBI Taxonomy" id="9606"/>
    <lineage>
        <taxon>Eukaryota</taxon>
        <taxon>Metazoa</taxon>
        <taxon>Chordata</taxon>
        <taxon>Craniata</taxon>
        <taxon>Vertebrata</taxon>
        <taxon>Euteleostomi</taxon>
        <taxon>Mammalia</taxon>
        <taxon>Eutheria</taxon>
        <taxon>Euarchontoglires</taxon>
        <taxon>Primates</taxon>
        <taxon>Haplorrhini</taxon>
        <taxon>Catarrhini</taxon>
        <taxon>Hominidae</taxon>
        <taxon>Homo</taxon>
    </lineage>
</organism>
<name>TM39A_HUMAN</name>
<feature type="chain" id="PRO_0000279224" description="Transmembrane protein 39A">
    <location>
        <begin position="1"/>
        <end position="488"/>
    </location>
</feature>
<feature type="transmembrane region" description="Helical" evidence="1">
    <location>
        <begin position="72"/>
        <end position="92"/>
    </location>
</feature>
<feature type="transmembrane region" description="Helical" evidence="1">
    <location>
        <begin position="110"/>
        <end position="130"/>
    </location>
</feature>
<feature type="transmembrane region" description="Helical" evidence="1">
    <location>
        <begin position="154"/>
        <end position="174"/>
    </location>
</feature>
<feature type="transmembrane region" description="Helical" evidence="1">
    <location>
        <begin position="182"/>
        <end position="202"/>
    </location>
</feature>
<feature type="transmembrane region" description="Helical" evidence="1">
    <location>
        <begin position="287"/>
        <end position="307"/>
    </location>
</feature>
<feature type="transmembrane region" description="Helical" evidence="1">
    <location>
        <begin position="319"/>
        <end position="339"/>
    </location>
</feature>
<feature type="transmembrane region" description="Helical" evidence="1">
    <location>
        <begin position="420"/>
        <end position="440"/>
    </location>
</feature>
<feature type="transmembrane region" description="Helical" evidence="1">
    <location>
        <begin position="446"/>
        <end position="466"/>
    </location>
</feature>
<feature type="glycosylation site" description="N-linked (GlcNAc...) asparagine" evidence="1">
    <location>
        <position position="31"/>
    </location>
</feature>
<feature type="glycosylation site" description="N-linked (GlcNAc...) asparagine" evidence="1">
    <location>
        <position position="39"/>
    </location>
</feature>
<feature type="splice variant" id="VSP_023416" description="In isoform 2." evidence="7">
    <original>ATKAGA</original>
    <variation>VCVCKL</variation>
    <location>
        <begin position="141"/>
        <end position="146"/>
    </location>
</feature>
<feature type="splice variant" id="VSP_023417" description="In isoform 2." evidence="7">
    <location>
        <begin position="147"/>
        <end position="488"/>
    </location>
</feature>
<feature type="sequence variant" id="VAR_036095" description="In a breast cancer sample; somatic mutation." evidence="2">
    <original>S</original>
    <variation>L</variation>
    <location>
        <position position="247"/>
    </location>
</feature>
<feature type="sequence variant" id="VAR_030871" description="In dbSNP:rs1132200." evidence="6">
    <original>A</original>
    <variation>T</variation>
    <location>
        <position position="487"/>
    </location>
</feature>
<feature type="sequence conflict" description="In Ref. 2; BAD96968." evidence="9" ref="2">
    <original>F</original>
    <variation>L</variation>
    <location>
        <position position="79"/>
    </location>
</feature>
<reference key="1">
    <citation type="journal article" date="2004" name="Nat. Genet.">
        <title>Complete sequencing and characterization of 21,243 full-length human cDNAs.</title>
        <authorList>
            <person name="Ota T."/>
            <person name="Suzuki Y."/>
            <person name="Nishikawa T."/>
            <person name="Otsuki T."/>
            <person name="Sugiyama T."/>
            <person name="Irie R."/>
            <person name="Wakamatsu A."/>
            <person name="Hayashi K."/>
            <person name="Sato H."/>
            <person name="Nagai K."/>
            <person name="Kimura K."/>
            <person name="Makita H."/>
            <person name="Sekine M."/>
            <person name="Obayashi M."/>
            <person name="Nishi T."/>
            <person name="Shibahara T."/>
            <person name="Tanaka T."/>
            <person name="Ishii S."/>
            <person name="Yamamoto J."/>
            <person name="Saito K."/>
            <person name="Kawai Y."/>
            <person name="Isono Y."/>
            <person name="Nakamura Y."/>
            <person name="Nagahari K."/>
            <person name="Murakami K."/>
            <person name="Yasuda T."/>
            <person name="Iwayanagi T."/>
            <person name="Wagatsuma M."/>
            <person name="Shiratori A."/>
            <person name="Sudo H."/>
            <person name="Hosoiri T."/>
            <person name="Kaku Y."/>
            <person name="Kodaira H."/>
            <person name="Kondo H."/>
            <person name="Sugawara M."/>
            <person name="Takahashi M."/>
            <person name="Kanda K."/>
            <person name="Yokoi T."/>
            <person name="Furuya T."/>
            <person name="Kikkawa E."/>
            <person name="Omura Y."/>
            <person name="Abe K."/>
            <person name="Kamihara K."/>
            <person name="Katsuta N."/>
            <person name="Sato K."/>
            <person name="Tanikawa M."/>
            <person name="Yamazaki M."/>
            <person name="Ninomiya K."/>
            <person name="Ishibashi T."/>
            <person name="Yamashita H."/>
            <person name="Murakawa K."/>
            <person name="Fujimori K."/>
            <person name="Tanai H."/>
            <person name="Kimata M."/>
            <person name="Watanabe M."/>
            <person name="Hiraoka S."/>
            <person name="Chiba Y."/>
            <person name="Ishida S."/>
            <person name="Ono Y."/>
            <person name="Takiguchi S."/>
            <person name="Watanabe S."/>
            <person name="Yosida M."/>
            <person name="Hotuta T."/>
            <person name="Kusano J."/>
            <person name="Kanehori K."/>
            <person name="Takahashi-Fujii A."/>
            <person name="Hara H."/>
            <person name="Tanase T.-O."/>
            <person name="Nomura Y."/>
            <person name="Togiya S."/>
            <person name="Komai F."/>
            <person name="Hara R."/>
            <person name="Takeuchi K."/>
            <person name="Arita M."/>
            <person name="Imose N."/>
            <person name="Musashino K."/>
            <person name="Yuuki H."/>
            <person name="Oshima A."/>
            <person name="Sasaki N."/>
            <person name="Aotsuka S."/>
            <person name="Yoshikawa Y."/>
            <person name="Matsunawa H."/>
            <person name="Ichihara T."/>
            <person name="Shiohata N."/>
            <person name="Sano S."/>
            <person name="Moriya S."/>
            <person name="Momiyama H."/>
            <person name="Satoh N."/>
            <person name="Takami S."/>
            <person name="Terashima Y."/>
            <person name="Suzuki O."/>
            <person name="Nakagawa S."/>
            <person name="Senoh A."/>
            <person name="Mizoguchi H."/>
            <person name="Goto Y."/>
            <person name="Shimizu F."/>
            <person name="Wakebe H."/>
            <person name="Hishigaki H."/>
            <person name="Watanabe T."/>
            <person name="Sugiyama A."/>
            <person name="Takemoto M."/>
            <person name="Kawakami B."/>
            <person name="Yamazaki M."/>
            <person name="Watanabe K."/>
            <person name="Kumagai A."/>
            <person name="Itakura S."/>
            <person name="Fukuzumi Y."/>
            <person name="Fujimori Y."/>
            <person name="Komiyama M."/>
            <person name="Tashiro H."/>
            <person name="Tanigami A."/>
            <person name="Fujiwara T."/>
            <person name="Ono T."/>
            <person name="Yamada K."/>
            <person name="Fujii Y."/>
            <person name="Ozaki K."/>
            <person name="Hirao M."/>
            <person name="Ohmori Y."/>
            <person name="Kawabata A."/>
            <person name="Hikiji T."/>
            <person name="Kobatake N."/>
            <person name="Inagaki H."/>
            <person name="Ikema Y."/>
            <person name="Okamoto S."/>
            <person name="Okitani R."/>
            <person name="Kawakami T."/>
            <person name="Noguchi S."/>
            <person name="Itoh T."/>
            <person name="Shigeta K."/>
            <person name="Senba T."/>
            <person name="Matsumura K."/>
            <person name="Nakajima Y."/>
            <person name="Mizuno T."/>
            <person name="Morinaga M."/>
            <person name="Sasaki M."/>
            <person name="Togashi T."/>
            <person name="Oyama M."/>
            <person name="Hata H."/>
            <person name="Watanabe M."/>
            <person name="Komatsu T."/>
            <person name="Mizushima-Sugano J."/>
            <person name="Satoh T."/>
            <person name="Shirai Y."/>
            <person name="Takahashi Y."/>
            <person name="Nakagawa K."/>
            <person name="Okumura K."/>
            <person name="Nagase T."/>
            <person name="Nomura N."/>
            <person name="Kikuchi H."/>
            <person name="Masuho Y."/>
            <person name="Yamashita R."/>
            <person name="Nakai K."/>
            <person name="Yada T."/>
            <person name="Nakamura Y."/>
            <person name="Ohara O."/>
            <person name="Isogai T."/>
            <person name="Sugano S."/>
        </authorList>
    </citation>
    <scope>NUCLEOTIDE SEQUENCE [LARGE SCALE MRNA] (ISOFORM 1)</scope>
</reference>
<reference key="2">
    <citation type="submission" date="2005-04" db="EMBL/GenBank/DDBJ databases">
        <authorList>
            <person name="Suzuki Y."/>
            <person name="Sugano S."/>
            <person name="Totoki Y."/>
            <person name="Toyoda A."/>
            <person name="Takeda T."/>
            <person name="Sakaki Y."/>
            <person name="Tanaka A."/>
            <person name="Yokoyama S."/>
        </authorList>
    </citation>
    <scope>NUCLEOTIDE SEQUENCE [LARGE SCALE MRNA] (ISOFORM 1)</scope>
    <scope>VARIANT THR-487</scope>
    <source>
        <tissue>Gastric mucosa</tissue>
        <tissue>Kidney</tissue>
    </source>
</reference>
<reference key="3">
    <citation type="submission" date="2005-09" db="EMBL/GenBank/DDBJ databases">
        <authorList>
            <person name="Mural R.J."/>
            <person name="Istrail S."/>
            <person name="Sutton G.G."/>
            <person name="Florea L."/>
            <person name="Halpern A.L."/>
            <person name="Mobarry C.M."/>
            <person name="Lippert R."/>
            <person name="Walenz B."/>
            <person name="Shatkay H."/>
            <person name="Dew I."/>
            <person name="Miller J.R."/>
            <person name="Flanigan M.J."/>
            <person name="Edwards N.J."/>
            <person name="Bolanos R."/>
            <person name="Fasulo D."/>
            <person name="Halldorsson B.V."/>
            <person name="Hannenhalli S."/>
            <person name="Turner R."/>
            <person name="Yooseph S."/>
            <person name="Lu F."/>
            <person name="Nusskern D.R."/>
            <person name="Shue B.C."/>
            <person name="Zheng X.H."/>
            <person name="Zhong F."/>
            <person name="Delcher A.L."/>
            <person name="Huson D.H."/>
            <person name="Kravitz S.A."/>
            <person name="Mouchard L."/>
            <person name="Reinert K."/>
            <person name="Remington K.A."/>
            <person name="Clark A.G."/>
            <person name="Waterman M.S."/>
            <person name="Eichler E.E."/>
            <person name="Adams M.D."/>
            <person name="Hunkapiller M.W."/>
            <person name="Myers E.W."/>
            <person name="Venter J.C."/>
        </authorList>
    </citation>
    <scope>NUCLEOTIDE SEQUENCE [LARGE SCALE GENOMIC DNA]</scope>
</reference>
<reference key="4">
    <citation type="journal article" date="2004" name="Genome Res.">
        <title>The status, quality, and expansion of the NIH full-length cDNA project: the Mammalian Gene Collection (MGC).</title>
        <authorList>
            <consortium name="The MGC Project Team"/>
        </authorList>
    </citation>
    <scope>NUCLEOTIDE SEQUENCE [LARGE SCALE MRNA] (ISOFORMS 1 AND 2)</scope>
    <source>
        <tissue>Brain</tissue>
        <tissue>Colon</tissue>
    </source>
</reference>
<reference key="5">
    <citation type="journal article" date="2006" name="Science">
        <title>The consensus coding sequences of human breast and colorectal cancers.</title>
        <authorList>
            <person name="Sjoeblom T."/>
            <person name="Jones S."/>
            <person name="Wood L.D."/>
            <person name="Parsons D.W."/>
            <person name="Lin J."/>
            <person name="Barber T.D."/>
            <person name="Mandelker D."/>
            <person name="Leary R.J."/>
            <person name="Ptak J."/>
            <person name="Silliman N."/>
            <person name="Szabo S."/>
            <person name="Buckhaults P."/>
            <person name="Farrell C."/>
            <person name="Meeh P."/>
            <person name="Markowitz S.D."/>
            <person name="Willis J."/>
            <person name="Dawson D."/>
            <person name="Willson J.K.V."/>
            <person name="Gazdar A.F."/>
            <person name="Hartigan J."/>
            <person name="Wu L."/>
            <person name="Liu C."/>
            <person name="Parmigiani G."/>
            <person name="Park B.H."/>
            <person name="Bachman K.E."/>
            <person name="Papadopoulos N."/>
            <person name="Vogelstein B."/>
            <person name="Kinzler K.W."/>
            <person name="Velculescu V.E."/>
        </authorList>
    </citation>
    <scope>VARIANT [LARGE SCALE ANALYSIS] LEU-247</scope>
</reference>
<reference key="6">
    <citation type="journal article" date="2017" name="Toxicol. Res.">
        <title>Recognition of Transmembrane Protein 39A as a Tumor-Specific Marker in Brain Tumor.</title>
        <authorList>
            <person name="Park J."/>
            <person name="Lee H."/>
            <person name="Tran Q."/>
            <person name="Mun K."/>
            <person name="Kim D."/>
            <person name="Hong Y."/>
            <person name="Kwon S.H."/>
            <person name="Brazil D."/>
            <person name="Park J."/>
            <person name="Kim S.H."/>
        </authorList>
    </citation>
    <scope>TISSUE SPECIFICITY</scope>
</reference>
<reference key="7">
    <citation type="journal article" date="2019" name="Front. Microbiol.">
        <title>Transmembrane Protein 39A Promotes the Replication of Encephalomyocarditis Virus via Autophagy Pathway.</title>
        <authorList>
            <person name="Li X."/>
            <person name="Ma R."/>
            <person name="Li Q."/>
            <person name="Li S."/>
            <person name="Zhang H."/>
            <person name="Xie J."/>
            <person name="Bai J."/>
            <person name="Idris A."/>
            <person name="Feng R."/>
        </authorList>
    </citation>
    <scope>FUNCTION (MICROBIAL INFECTION)</scope>
    <scope>INTERACTION WITH EMCV CAPSID PROTEINS VP1 AND VP2 (MICROBIAL INFECTION)</scope>
</reference>
<reference key="8">
    <citation type="journal article" date="2019" name="Mol. Cell">
        <title>The ER-Localized Transmembrane Protein TMEM39A/SUSR2 Regulates Autophagy by Controlling the Trafficking of the PtdIns(4)P Phosphatase SAC1.</title>
        <authorList>
            <person name="Miao G."/>
            <person name="Zhang Y."/>
            <person name="Chen D."/>
            <person name="Zhang H."/>
        </authorList>
    </citation>
    <scope>FUNCTION</scope>
    <scope>SUBCELLULAR LOCATION</scope>
    <scope>INTERACTION WITH SACM1L; SEC23A AND SEC24A</scope>
</reference>
<evidence type="ECO:0000255" key="1"/>
<evidence type="ECO:0000269" key="2">
    <source>
    </source>
</evidence>
<evidence type="ECO:0000269" key="3">
    <source>
    </source>
</evidence>
<evidence type="ECO:0000269" key="4">
    <source>
    </source>
</evidence>
<evidence type="ECO:0000269" key="5">
    <source>
    </source>
</evidence>
<evidence type="ECO:0000269" key="6">
    <source ref="2"/>
</evidence>
<evidence type="ECO:0000303" key="7">
    <source>
    </source>
</evidence>
<evidence type="ECO:0000303" key="8">
    <source>
    </source>
</evidence>
<evidence type="ECO:0000305" key="9"/>
<dbReference type="EMBL" id="AK001764">
    <property type="protein sequence ID" value="BAA91893.1"/>
    <property type="molecule type" value="mRNA"/>
</dbReference>
<dbReference type="EMBL" id="AK223248">
    <property type="protein sequence ID" value="BAD96968.1"/>
    <property type="molecule type" value="mRNA"/>
</dbReference>
<dbReference type="EMBL" id="AK222950">
    <property type="protein sequence ID" value="BAD96670.1"/>
    <property type="molecule type" value="mRNA"/>
</dbReference>
<dbReference type="EMBL" id="CH471052">
    <property type="protein sequence ID" value="EAW79571.1"/>
    <property type="molecule type" value="Genomic_DNA"/>
</dbReference>
<dbReference type="EMBL" id="CH471052">
    <property type="protein sequence ID" value="EAW79572.1"/>
    <property type="molecule type" value="Genomic_DNA"/>
</dbReference>
<dbReference type="EMBL" id="BC003192">
    <property type="protein sequence ID" value="AAH03192.1"/>
    <property type="molecule type" value="mRNA"/>
</dbReference>
<dbReference type="EMBL" id="BC021277">
    <property type="protein sequence ID" value="AAH21277.1"/>
    <property type="molecule type" value="mRNA"/>
</dbReference>
<dbReference type="CCDS" id="CCDS2987.1">
    <molecule id="Q9NV64-1"/>
</dbReference>
<dbReference type="RefSeq" id="NP_060736.1">
    <molecule id="Q9NV64-1"/>
    <property type="nucleotide sequence ID" value="NM_018266.3"/>
</dbReference>
<dbReference type="RefSeq" id="XP_006713750.1">
    <molecule id="Q9NV64-1"/>
    <property type="nucleotide sequence ID" value="XM_006713687.3"/>
</dbReference>
<dbReference type="RefSeq" id="XP_054203138.1">
    <molecule id="Q9NV64-1"/>
    <property type="nucleotide sequence ID" value="XM_054347163.1"/>
</dbReference>
<dbReference type="BioGRID" id="120545">
    <property type="interactions" value="55"/>
</dbReference>
<dbReference type="FunCoup" id="Q9NV64">
    <property type="interactions" value="1135"/>
</dbReference>
<dbReference type="IntAct" id="Q9NV64">
    <property type="interactions" value="46"/>
</dbReference>
<dbReference type="MINT" id="Q9NV64"/>
<dbReference type="STRING" id="9606.ENSP00000326063"/>
<dbReference type="TCDB" id="9.B.385.1.1">
    <property type="family name" value="the tmem39a or susr2 (tmem39a) family"/>
</dbReference>
<dbReference type="GlyCosmos" id="Q9NV64">
    <property type="glycosylation" value="2 sites, No reported glycans"/>
</dbReference>
<dbReference type="GlyGen" id="Q9NV64">
    <property type="glycosylation" value="2 sites"/>
</dbReference>
<dbReference type="iPTMnet" id="Q9NV64"/>
<dbReference type="PhosphoSitePlus" id="Q9NV64"/>
<dbReference type="SwissPalm" id="Q9NV64"/>
<dbReference type="BioMuta" id="TMEM39A"/>
<dbReference type="DMDM" id="74734456"/>
<dbReference type="jPOST" id="Q9NV64"/>
<dbReference type="MassIVE" id="Q9NV64"/>
<dbReference type="PaxDb" id="9606-ENSP00000326063"/>
<dbReference type="PeptideAtlas" id="Q9NV64"/>
<dbReference type="ProteomicsDB" id="82750">
    <molecule id="Q9NV64-1"/>
</dbReference>
<dbReference type="ProteomicsDB" id="82751">
    <molecule id="Q9NV64-2"/>
</dbReference>
<dbReference type="Pumba" id="Q9NV64"/>
<dbReference type="Antibodypedia" id="49908">
    <property type="antibodies" value="24 antibodies from 12 providers"/>
</dbReference>
<dbReference type="DNASU" id="55254"/>
<dbReference type="Ensembl" id="ENST00000319172.10">
    <molecule id="Q9NV64-1"/>
    <property type="protein sequence ID" value="ENSP00000326063.5"/>
    <property type="gene ID" value="ENSG00000176142.13"/>
</dbReference>
<dbReference type="Ensembl" id="ENST00000438581.6">
    <molecule id="Q9NV64-2"/>
    <property type="protein sequence ID" value="ENSP00000402149.2"/>
    <property type="gene ID" value="ENSG00000176142.13"/>
</dbReference>
<dbReference type="GeneID" id="55254"/>
<dbReference type="KEGG" id="hsa:55254"/>
<dbReference type="MANE-Select" id="ENST00000319172.10">
    <property type="protein sequence ID" value="ENSP00000326063.5"/>
    <property type="RefSeq nucleotide sequence ID" value="NM_018266.3"/>
    <property type="RefSeq protein sequence ID" value="NP_060736.1"/>
</dbReference>
<dbReference type="UCSC" id="uc003eck.3">
    <molecule id="Q9NV64-1"/>
    <property type="organism name" value="human"/>
</dbReference>
<dbReference type="AGR" id="HGNC:25600"/>
<dbReference type="CTD" id="55254"/>
<dbReference type="DisGeNET" id="55254"/>
<dbReference type="GeneCards" id="TMEM39A"/>
<dbReference type="HGNC" id="HGNC:25600">
    <property type="gene designation" value="TMEM39A"/>
</dbReference>
<dbReference type="HPA" id="ENSG00000176142">
    <property type="expression patterns" value="Low tissue specificity"/>
</dbReference>
<dbReference type="neXtProt" id="NX_Q9NV64"/>
<dbReference type="OpenTargets" id="ENSG00000176142"/>
<dbReference type="PharmGKB" id="PA134956032"/>
<dbReference type="VEuPathDB" id="HostDB:ENSG00000176142"/>
<dbReference type="eggNOG" id="KOG3828">
    <property type="taxonomic scope" value="Eukaryota"/>
</dbReference>
<dbReference type="GeneTree" id="ENSGT00390000018895"/>
<dbReference type="HOGENOM" id="CLU_028992_0_0_1"/>
<dbReference type="InParanoid" id="Q9NV64"/>
<dbReference type="OMA" id="RFKQLIF"/>
<dbReference type="OrthoDB" id="5862608at2759"/>
<dbReference type="PAN-GO" id="Q9NV64">
    <property type="GO annotations" value="3 GO annotations based on evolutionary models"/>
</dbReference>
<dbReference type="PhylomeDB" id="Q9NV64"/>
<dbReference type="TreeFam" id="TF321110"/>
<dbReference type="PathwayCommons" id="Q9NV64"/>
<dbReference type="SignaLink" id="Q9NV64"/>
<dbReference type="BioGRID-ORCS" id="55254">
    <property type="hits" value="17 hits in 1158 CRISPR screens"/>
</dbReference>
<dbReference type="ChiTaRS" id="TMEM39A">
    <property type="organism name" value="human"/>
</dbReference>
<dbReference type="GenomeRNAi" id="55254"/>
<dbReference type="Pharos" id="Q9NV64">
    <property type="development level" value="Tbio"/>
</dbReference>
<dbReference type="PRO" id="PR:Q9NV64"/>
<dbReference type="Proteomes" id="UP000005640">
    <property type="component" value="Chromosome 3"/>
</dbReference>
<dbReference type="RNAct" id="Q9NV64">
    <property type="molecule type" value="protein"/>
</dbReference>
<dbReference type="Bgee" id="ENSG00000176142">
    <property type="expression patterns" value="Expressed in stromal cell of endometrium and 173 other cell types or tissues"/>
</dbReference>
<dbReference type="ExpressionAtlas" id="Q9NV64">
    <property type="expression patterns" value="baseline and differential"/>
</dbReference>
<dbReference type="GO" id="GO:0005789">
    <property type="term" value="C:endoplasmic reticulum membrane"/>
    <property type="evidence" value="ECO:0000314"/>
    <property type="project" value="UniProtKB"/>
</dbReference>
<dbReference type="GO" id="GO:0006914">
    <property type="term" value="P:autophagy"/>
    <property type="evidence" value="ECO:0007669"/>
    <property type="project" value="UniProtKB-KW"/>
</dbReference>
<dbReference type="GO" id="GO:1902902">
    <property type="term" value="P:negative regulation of autophagosome assembly"/>
    <property type="evidence" value="ECO:0000315"/>
    <property type="project" value="UniProtKB"/>
</dbReference>
<dbReference type="GO" id="GO:1901097">
    <property type="term" value="P:negative regulation of autophagosome maturation"/>
    <property type="evidence" value="ECO:0000315"/>
    <property type="project" value="UniProtKB"/>
</dbReference>
<dbReference type="GO" id="GO:0045070">
    <property type="term" value="P:positive regulation of viral genome replication"/>
    <property type="evidence" value="ECO:0000314"/>
    <property type="project" value="UniProtKB"/>
</dbReference>
<dbReference type="InterPro" id="IPR019397">
    <property type="entry name" value="Uncharacterised_TMEM39"/>
</dbReference>
<dbReference type="PANTHER" id="PTHR12995">
    <property type="entry name" value="FI21814P1"/>
    <property type="match status" value="1"/>
</dbReference>
<dbReference type="PANTHER" id="PTHR12995:SF3">
    <property type="entry name" value="TRANSMEMBRANE PROTEIN 39A"/>
    <property type="match status" value="1"/>
</dbReference>
<dbReference type="Pfam" id="PF10271">
    <property type="entry name" value="Tmp39"/>
    <property type="match status" value="1"/>
</dbReference>
<accession>Q9NV64</accession>
<accession>D3DN80</accession>
<accession>Q53FN4</accession>
<accession>Q53GI1</accession>
<accession>Q6PKB5</accession>
<comment type="function">
    <text evidence="4">Regulates autophagy by controlling the spatial distribution and levels of the intracellular phosphatidylinositol 4-phosphate (PtdIns(4)P) pools (PubMed:31806350). Modulates (PtdIns(4)P) levels by regulating the ER-to-Golgi trafficking of the phosphatidylinositide phosphatase SACM1L (PubMed:31806350).</text>
</comment>
<comment type="function">
    <text evidence="5">(Microbial infection) Positively regulates the replication of encephalomyocarditis virus (EMCV) via autophagy-dependent pathway.</text>
</comment>
<comment type="subunit">
    <text evidence="4">Interacts with SACM1L, SEC23A and SEC24A.</text>
</comment>
<comment type="subunit">
    <text evidence="5">(Microbial infection) Interacts with encephalomyocarditis virus (EMCV) major capsid proteins VP1 and VP2.</text>
</comment>
<comment type="subcellular location">
    <subcellularLocation>
        <location evidence="4">Endoplasmic reticulum membrane</location>
        <topology evidence="1">Multi-pass membrane protein</topology>
    </subcellularLocation>
</comment>
<comment type="alternative products">
    <event type="alternative splicing"/>
    <isoform>
        <id>Q9NV64-1</id>
        <name>1</name>
        <sequence type="displayed"/>
    </isoform>
    <isoform>
        <id>Q9NV64-2</id>
        <name>2</name>
        <sequence type="described" ref="VSP_023416 VSP_023417"/>
    </isoform>
</comment>
<comment type="tissue specificity">
    <text evidence="3">Up-regulated in brain tumor glioblastoma multiforme cells (at protein level).</text>
</comment>
<comment type="similarity">
    <text evidence="9">Belongs to the TMEM39 family.</text>
</comment>
<gene>
    <name type="primary">TMEM39A</name>
    <name evidence="8" type="synonym">SUSR2</name>
</gene>
<sequence>MPGGRRGPSRQQLSRSALPSLQTLVGGGCGNGTGLRNRNGSAIGLPVPPITALITPGPVRHCQIPDLPVDGSLLFEFLFFIYLLVALFIQYINIYKTVWWYPYNHPASCTSLNFHLIDYHLAAFITVMLARRLVWALISEATKAGAASMIHYMVLISARLVLLTLCGWVLCWTLVNLFRSHSVLNLLFLGYPFGVYVPLCCFHQDSRAHLLLTDYNYVVQHEAVEESASTVGGLAKSKDFLSLLLESLKEQFNNATPIPTHSCPLSPDLIRNEVECLKADFNHRIKEVLFNSLFSAYYVAFLPLCFVKSTQYYDMRWSCEHLIMVWINAFVMLTTQLLPSKYCDLLHKSAAHLGKWQKLEHGSYSNAPQHIWSENTIWPQGVLVRHSRCLYRAMGPYNVAVPSDVSHARFYFLFHRPLRLLNLLILIEGSVVFYQLYSLLRSEKWNHTLSMALILFCNYYVLFKLLRDRIVLGRAYSYPLNSYELKAN</sequence>
<proteinExistence type="evidence at protein level"/>